<dbReference type="EMBL" id="AE006914">
    <property type="protein sequence ID" value="AAL02673.1"/>
    <property type="molecule type" value="Genomic_DNA"/>
</dbReference>
<dbReference type="PIR" id="G97716">
    <property type="entry name" value="G97716"/>
</dbReference>
<dbReference type="SMR" id="Q92JD2"/>
<dbReference type="KEGG" id="rco:RC0135"/>
<dbReference type="HOGENOM" id="CLU_1968877_0_0_5"/>
<dbReference type="Proteomes" id="UP000000816">
    <property type="component" value="Chromosome"/>
</dbReference>
<dbReference type="Gene3D" id="1.25.40.10">
    <property type="entry name" value="Tetratricopeptide repeat domain"/>
    <property type="match status" value="1"/>
</dbReference>
<dbReference type="InterPro" id="IPR011990">
    <property type="entry name" value="TPR-like_helical_dom_sf"/>
</dbReference>
<organism>
    <name type="scientific">Rickettsia conorii (strain ATCC VR-613 / Malish 7)</name>
    <dbReference type="NCBI Taxonomy" id="272944"/>
    <lineage>
        <taxon>Bacteria</taxon>
        <taxon>Pseudomonadati</taxon>
        <taxon>Pseudomonadota</taxon>
        <taxon>Alphaproteobacteria</taxon>
        <taxon>Rickettsiales</taxon>
        <taxon>Rickettsiaceae</taxon>
        <taxon>Rickettsieae</taxon>
        <taxon>Rickettsia</taxon>
        <taxon>spotted fever group</taxon>
    </lineage>
</organism>
<gene>
    <name type="ordered locus">RC0135</name>
</gene>
<feature type="chain" id="PRO_0000101457" description="Uncharacterized protein RC0135">
    <location>
        <begin position="1"/>
        <end position="127"/>
    </location>
</feature>
<proteinExistence type="predicted"/>
<reference key="1">
    <citation type="journal article" date="2001" name="Science">
        <title>Mechanisms of evolution in Rickettsia conorii and R. prowazekii.</title>
        <authorList>
            <person name="Ogata H."/>
            <person name="Audic S."/>
            <person name="Renesto-Audiffren P."/>
            <person name="Fournier P.-E."/>
            <person name="Barbe V."/>
            <person name="Samson D."/>
            <person name="Roux V."/>
            <person name="Cossart P."/>
            <person name="Weissenbach J."/>
            <person name="Claverie J.-M."/>
            <person name="Raoult D."/>
        </authorList>
    </citation>
    <scope>NUCLEOTIDE SEQUENCE [LARGE SCALE GENOMIC DNA]</scope>
    <source>
        <strain>ATCC VR-613 / Malish 7</strain>
    </source>
</reference>
<protein>
    <recommendedName>
        <fullName>Uncharacterized protein RC0135</fullName>
    </recommendedName>
</protein>
<sequence length="127" mass="14505">MPSSFPEYISNLNPKPLSTKEQIDHNQAAFCIMKDLNYIDNHLVALKQLQQAEQIAIGQTDSNFLSYINAMIGRSYQQLGLFDNAIQQFQDSIENSFEAKQYYNVENSYKELVTAHQPQGTLAKLKN</sequence>
<name>Y135_RICCN</name>
<accession>Q92JD2</accession>